<evidence type="ECO:0000255" key="1">
    <source>
        <dbReference type="HAMAP-Rule" id="MF_01713"/>
    </source>
</evidence>
<accession>Q119J0</accession>
<organism>
    <name type="scientific">Trichodesmium erythraeum (strain IMS101)</name>
    <dbReference type="NCBI Taxonomy" id="203124"/>
    <lineage>
        <taxon>Bacteria</taxon>
        <taxon>Bacillati</taxon>
        <taxon>Cyanobacteriota</taxon>
        <taxon>Cyanophyceae</taxon>
        <taxon>Oscillatoriophycideae</taxon>
        <taxon>Oscillatoriales</taxon>
        <taxon>Microcoleaceae</taxon>
        <taxon>Trichodesmium</taxon>
    </lineage>
</organism>
<reference key="1">
    <citation type="journal article" date="2015" name="Proc. Natl. Acad. Sci. U.S.A.">
        <title>Trichodesmium genome maintains abundant, widespread noncoding DNA in situ, despite oligotrophic lifestyle.</title>
        <authorList>
            <person name="Walworth N."/>
            <person name="Pfreundt U."/>
            <person name="Nelson W.C."/>
            <person name="Mincer T."/>
            <person name="Heidelberg J.F."/>
            <person name="Fu F."/>
            <person name="Waterbury J.B."/>
            <person name="Glavina del Rio T."/>
            <person name="Goodwin L."/>
            <person name="Kyrpides N.C."/>
            <person name="Land M.L."/>
            <person name="Woyke T."/>
            <person name="Hutchins D.A."/>
            <person name="Hess W.R."/>
            <person name="Webb E.A."/>
        </authorList>
    </citation>
    <scope>NUCLEOTIDE SEQUENCE [LARGE SCALE GENOMIC DNA]</scope>
    <source>
        <strain>IMS101</strain>
    </source>
</reference>
<comment type="function">
    <text evidence="1">Part of the ABC transporter complex PhnCDE involved in phosphonates import. Responsible for energy coupling to the transport system.</text>
</comment>
<comment type="catalytic activity">
    <reaction evidence="1">
        <text>phosphonate(out) + ATP + H2O = phosphonate(in) + ADP + phosphate + H(+)</text>
        <dbReference type="Rhea" id="RHEA:18065"/>
        <dbReference type="ChEBI" id="CHEBI:15377"/>
        <dbReference type="ChEBI" id="CHEBI:15378"/>
        <dbReference type="ChEBI" id="CHEBI:16215"/>
        <dbReference type="ChEBI" id="CHEBI:30616"/>
        <dbReference type="ChEBI" id="CHEBI:43474"/>
        <dbReference type="ChEBI" id="CHEBI:456216"/>
        <dbReference type="EC" id="7.3.2.2"/>
    </reaction>
</comment>
<comment type="subunit">
    <text evidence="1">The complex is composed of two ATP-binding proteins (PhnC), two transmembrane proteins (PhnE) and a solute-binding protein (PhnD).</text>
</comment>
<comment type="subcellular location">
    <subcellularLocation>
        <location evidence="1">Cell inner membrane</location>
        <topology evidence="1">Peripheral membrane protein</topology>
    </subcellularLocation>
</comment>
<comment type="similarity">
    <text evidence="1">Belongs to the ABC transporter superfamily. Phosphonates importer (TC 3.A.1.9.1) family.</text>
</comment>
<sequence>MISLNKLGVTYPNGTEALHNISIELNQGEFTVILGSSGAGKSTLLRCINFLTYPTSGKVIIEGNGDLNHPKILQKHRQRTGMIFQQHQLIPRQTALKNVLVGRLGYHSTLRSLFPLPKTDQYIALNCLERVGLLEKALTPVQALSGGQQQRVGIARALAQKPKFILADEPIASLDPASSHQVLSNLQKICQEDRIGALISLHQVDLALQYAQRIIGLGKGTILFDCNPSEIKKQQLEEIYQTLSYNPISKTI</sequence>
<gene>
    <name evidence="1" type="primary">phnC1</name>
    <name type="ordered locus">Tery_0365</name>
</gene>
<name>PHNC1_TRIEI</name>
<protein>
    <recommendedName>
        <fullName evidence="1">Phosphonates import ATP-binding protein PhnC 1</fullName>
        <ecNumber evidence="1">7.3.2.2</ecNumber>
    </recommendedName>
</protein>
<feature type="chain" id="PRO_0000274767" description="Phosphonates import ATP-binding protein PhnC 1">
    <location>
        <begin position="1"/>
        <end position="252"/>
    </location>
</feature>
<feature type="domain" description="ABC transporter" evidence="1">
    <location>
        <begin position="2"/>
        <end position="244"/>
    </location>
</feature>
<feature type="binding site" evidence="1">
    <location>
        <begin position="35"/>
        <end position="42"/>
    </location>
    <ligand>
        <name>ATP</name>
        <dbReference type="ChEBI" id="CHEBI:30616"/>
    </ligand>
</feature>
<proteinExistence type="inferred from homology"/>
<dbReference type="EC" id="7.3.2.2" evidence="1"/>
<dbReference type="EMBL" id="CP000393">
    <property type="protein sequence ID" value="ABG49834.1"/>
    <property type="molecule type" value="Genomic_DNA"/>
</dbReference>
<dbReference type="RefSeq" id="WP_011610230.1">
    <property type="nucleotide sequence ID" value="NC_008312.1"/>
</dbReference>
<dbReference type="SMR" id="Q119J0"/>
<dbReference type="STRING" id="203124.Tery_0365"/>
<dbReference type="TCDB" id="3.A.1.9.3">
    <property type="family name" value="the atp-binding cassette (abc) superfamily"/>
</dbReference>
<dbReference type="KEGG" id="ter:Tery_0365"/>
<dbReference type="eggNOG" id="COG3638">
    <property type="taxonomic scope" value="Bacteria"/>
</dbReference>
<dbReference type="HOGENOM" id="CLU_000604_1_22_3"/>
<dbReference type="OrthoDB" id="9802264at2"/>
<dbReference type="GO" id="GO:0005886">
    <property type="term" value="C:plasma membrane"/>
    <property type="evidence" value="ECO:0007669"/>
    <property type="project" value="UniProtKB-SubCell"/>
</dbReference>
<dbReference type="GO" id="GO:0015416">
    <property type="term" value="F:ABC-type phosphonate transporter activity"/>
    <property type="evidence" value="ECO:0007669"/>
    <property type="project" value="UniProtKB-EC"/>
</dbReference>
<dbReference type="GO" id="GO:0005524">
    <property type="term" value="F:ATP binding"/>
    <property type="evidence" value="ECO:0007669"/>
    <property type="project" value="UniProtKB-KW"/>
</dbReference>
<dbReference type="GO" id="GO:0016887">
    <property type="term" value="F:ATP hydrolysis activity"/>
    <property type="evidence" value="ECO:0007669"/>
    <property type="project" value="InterPro"/>
</dbReference>
<dbReference type="CDD" id="cd03256">
    <property type="entry name" value="ABC_PhnC_transporter"/>
    <property type="match status" value="1"/>
</dbReference>
<dbReference type="Gene3D" id="3.40.50.300">
    <property type="entry name" value="P-loop containing nucleotide triphosphate hydrolases"/>
    <property type="match status" value="1"/>
</dbReference>
<dbReference type="InterPro" id="IPR003593">
    <property type="entry name" value="AAA+_ATPase"/>
</dbReference>
<dbReference type="InterPro" id="IPR003439">
    <property type="entry name" value="ABC_transporter-like_ATP-bd"/>
</dbReference>
<dbReference type="InterPro" id="IPR017871">
    <property type="entry name" value="ABC_transporter-like_CS"/>
</dbReference>
<dbReference type="InterPro" id="IPR012693">
    <property type="entry name" value="ABC_transpr_PhnC"/>
</dbReference>
<dbReference type="InterPro" id="IPR050086">
    <property type="entry name" value="MetN_ABC_transporter-like"/>
</dbReference>
<dbReference type="InterPro" id="IPR027417">
    <property type="entry name" value="P-loop_NTPase"/>
</dbReference>
<dbReference type="NCBIfam" id="TIGR02315">
    <property type="entry name" value="ABC_phnC"/>
    <property type="match status" value="1"/>
</dbReference>
<dbReference type="PANTHER" id="PTHR43166">
    <property type="entry name" value="AMINO ACID IMPORT ATP-BINDING PROTEIN"/>
    <property type="match status" value="1"/>
</dbReference>
<dbReference type="PANTHER" id="PTHR43166:SF6">
    <property type="entry name" value="PHOSPHONATES IMPORT ATP-BINDING PROTEIN PHNC"/>
    <property type="match status" value="1"/>
</dbReference>
<dbReference type="Pfam" id="PF00005">
    <property type="entry name" value="ABC_tran"/>
    <property type="match status" value="1"/>
</dbReference>
<dbReference type="SMART" id="SM00382">
    <property type="entry name" value="AAA"/>
    <property type="match status" value="1"/>
</dbReference>
<dbReference type="SUPFAM" id="SSF52540">
    <property type="entry name" value="P-loop containing nucleoside triphosphate hydrolases"/>
    <property type="match status" value="1"/>
</dbReference>
<dbReference type="PROSITE" id="PS00211">
    <property type="entry name" value="ABC_TRANSPORTER_1"/>
    <property type="match status" value="1"/>
</dbReference>
<dbReference type="PROSITE" id="PS50893">
    <property type="entry name" value="ABC_TRANSPORTER_2"/>
    <property type="match status" value="1"/>
</dbReference>
<dbReference type="PROSITE" id="PS51249">
    <property type="entry name" value="PHNC"/>
    <property type="match status" value="1"/>
</dbReference>
<keyword id="KW-0067">ATP-binding</keyword>
<keyword id="KW-0997">Cell inner membrane</keyword>
<keyword id="KW-1003">Cell membrane</keyword>
<keyword id="KW-0472">Membrane</keyword>
<keyword id="KW-0547">Nucleotide-binding</keyword>
<keyword id="KW-0918">Phosphonate transport</keyword>
<keyword id="KW-1278">Translocase</keyword>
<keyword id="KW-0813">Transport</keyword>